<accession>Q2KVE4</accession>
<comment type="function">
    <text evidence="1">Specifically methylates the N4 position of cytidine in position 1402 (C1402) of 16S rRNA.</text>
</comment>
<comment type="catalytic activity">
    <reaction evidence="1">
        <text>cytidine(1402) in 16S rRNA + S-adenosyl-L-methionine = N(4)-methylcytidine(1402) in 16S rRNA + S-adenosyl-L-homocysteine + H(+)</text>
        <dbReference type="Rhea" id="RHEA:42928"/>
        <dbReference type="Rhea" id="RHEA-COMP:10286"/>
        <dbReference type="Rhea" id="RHEA-COMP:10287"/>
        <dbReference type="ChEBI" id="CHEBI:15378"/>
        <dbReference type="ChEBI" id="CHEBI:57856"/>
        <dbReference type="ChEBI" id="CHEBI:59789"/>
        <dbReference type="ChEBI" id="CHEBI:74506"/>
        <dbReference type="ChEBI" id="CHEBI:82748"/>
        <dbReference type="EC" id="2.1.1.199"/>
    </reaction>
</comment>
<comment type="subcellular location">
    <subcellularLocation>
        <location evidence="1">Cytoplasm</location>
    </subcellularLocation>
</comment>
<comment type="similarity">
    <text evidence="1">Belongs to the methyltransferase superfamily. RsmH family.</text>
</comment>
<organism>
    <name type="scientific">Bordetella avium (strain 197N)</name>
    <dbReference type="NCBI Taxonomy" id="360910"/>
    <lineage>
        <taxon>Bacteria</taxon>
        <taxon>Pseudomonadati</taxon>
        <taxon>Pseudomonadota</taxon>
        <taxon>Betaproteobacteria</taxon>
        <taxon>Burkholderiales</taxon>
        <taxon>Alcaligenaceae</taxon>
        <taxon>Bordetella</taxon>
    </lineage>
</organism>
<keyword id="KW-0963">Cytoplasm</keyword>
<keyword id="KW-0489">Methyltransferase</keyword>
<keyword id="KW-1185">Reference proteome</keyword>
<keyword id="KW-0698">rRNA processing</keyword>
<keyword id="KW-0949">S-adenosyl-L-methionine</keyword>
<keyword id="KW-0808">Transferase</keyword>
<evidence type="ECO:0000255" key="1">
    <source>
        <dbReference type="HAMAP-Rule" id="MF_01007"/>
    </source>
</evidence>
<evidence type="ECO:0000256" key="2">
    <source>
        <dbReference type="SAM" id="MobiDB-lite"/>
    </source>
</evidence>
<feature type="chain" id="PRO_0000386751" description="Ribosomal RNA small subunit methyltransferase H">
    <location>
        <begin position="1"/>
        <end position="355"/>
    </location>
</feature>
<feature type="region of interest" description="Disordered" evidence="2">
    <location>
        <begin position="327"/>
        <end position="355"/>
    </location>
</feature>
<feature type="binding site" evidence="1">
    <location>
        <begin position="55"/>
        <end position="57"/>
    </location>
    <ligand>
        <name>S-adenosyl-L-methionine</name>
        <dbReference type="ChEBI" id="CHEBI:59789"/>
    </ligand>
</feature>
<feature type="binding site" evidence="1">
    <location>
        <position position="75"/>
    </location>
    <ligand>
        <name>S-adenosyl-L-methionine</name>
        <dbReference type="ChEBI" id="CHEBI:59789"/>
    </ligand>
</feature>
<feature type="binding site" evidence="1">
    <location>
        <position position="122"/>
    </location>
    <ligand>
        <name>S-adenosyl-L-methionine</name>
        <dbReference type="ChEBI" id="CHEBI:59789"/>
    </ligand>
</feature>
<feature type="binding site" evidence="1">
    <location>
        <position position="129"/>
    </location>
    <ligand>
        <name>S-adenosyl-L-methionine</name>
        <dbReference type="ChEBI" id="CHEBI:59789"/>
    </ligand>
</feature>
<protein>
    <recommendedName>
        <fullName evidence="1">Ribosomal RNA small subunit methyltransferase H</fullName>
        <ecNumber evidence="1">2.1.1.199</ecNumber>
    </recommendedName>
    <alternativeName>
        <fullName evidence="1">16S rRNA m(4)C1402 methyltransferase</fullName>
    </alternativeName>
    <alternativeName>
        <fullName evidence="1">rRNA (cytosine-N(4)-)-methyltransferase RsmH</fullName>
    </alternativeName>
</protein>
<name>RSMH_BORA1</name>
<proteinExistence type="inferred from homology"/>
<dbReference type="EC" id="2.1.1.199" evidence="1"/>
<dbReference type="EMBL" id="AM167904">
    <property type="protein sequence ID" value="CAJ50496.1"/>
    <property type="molecule type" value="Genomic_DNA"/>
</dbReference>
<dbReference type="RefSeq" id="WP_012418526.1">
    <property type="nucleotide sequence ID" value="NC_010645.1"/>
</dbReference>
<dbReference type="SMR" id="Q2KVE4"/>
<dbReference type="STRING" id="360910.BAV2886"/>
<dbReference type="GeneID" id="92933864"/>
<dbReference type="KEGG" id="bav:BAV2886"/>
<dbReference type="eggNOG" id="COG0275">
    <property type="taxonomic scope" value="Bacteria"/>
</dbReference>
<dbReference type="HOGENOM" id="CLU_038422_2_0_4"/>
<dbReference type="OrthoDB" id="9806637at2"/>
<dbReference type="Proteomes" id="UP000001977">
    <property type="component" value="Chromosome"/>
</dbReference>
<dbReference type="GO" id="GO:0005737">
    <property type="term" value="C:cytoplasm"/>
    <property type="evidence" value="ECO:0007669"/>
    <property type="project" value="UniProtKB-SubCell"/>
</dbReference>
<dbReference type="GO" id="GO:0071424">
    <property type="term" value="F:rRNA (cytosine-N4-)-methyltransferase activity"/>
    <property type="evidence" value="ECO:0007669"/>
    <property type="project" value="UniProtKB-UniRule"/>
</dbReference>
<dbReference type="GO" id="GO:0070475">
    <property type="term" value="P:rRNA base methylation"/>
    <property type="evidence" value="ECO:0007669"/>
    <property type="project" value="UniProtKB-UniRule"/>
</dbReference>
<dbReference type="Gene3D" id="1.10.150.170">
    <property type="entry name" value="Putative methyltransferase TM0872, insert domain"/>
    <property type="match status" value="1"/>
</dbReference>
<dbReference type="Gene3D" id="3.40.50.150">
    <property type="entry name" value="Vaccinia Virus protein VP39"/>
    <property type="match status" value="1"/>
</dbReference>
<dbReference type="HAMAP" id="MF_01007">
    <property type="entry name" value="16SrRNA_methyltr_H"/>
    <property type="match status" value="1"/>
</dbReference>
<dbReference type="InterPro" id="IPR002903">
    <property type="entry name" value="RsmH"/>
</dbReference>
<dbReference type="InterPro" id="IPR023397">
    <property type="entry name" value="SAM-dep_MeTrfase_MraW_recog"/>
</dbReference>
<dbReference type="InterPro" id="IPR029063">
    <property type="entry name" value="SAM-dependent_MTases_sf"/>
</dbReference>
<dbReference type="NCBIfam" id="TIGR00006">
    <property type="entry name" value="16S rRNA (cytosine(1402)-N(4))-methyltransferase RsmH"/>
    <property type="match status" value="1"/>
</dbReference>
<dbReference type="PANTHER" id="PTHR11265:SF0">
    <property type="entry name" value="12S RRNA N4-METHYLCYTIDINE METHYLTRANSFERASE"/>
    <property type="match status" value="1"/>
</dbReference>
<dbReference type="PANTHER" id="PTHR11265">
    <property type="entry name" value="S-ADENOSYL-METHYLTRANSFERASE MRAW"/>
    <property type="match status" value="1"/>
</dbReference>
<dbReference type="Pfam" id="PF01795">
    <property type="entry name" value="Methyltransf_5"/>
    <property type="match status" value="1"/>
</dbReference>
<dbReference type="PIRSF" id="PIRSF004486">
    <property type="entry name" value="MraW"/>
    <property type="match status" value="1"/>
</dbReference>
<dbReference type="SUPFAM" id="SSF81799">
    <property type="entry name" value="Putative methyltransferase TM0872, insert domain"/>
    <property type="match status" value="1"/>
</dbReference>
<dbReference type="SUPFAM" id="SSF53335">
    <property type="entry name" value="S-adenosyl-L-methionine-dependent methyltransferases"/>
    <property type="match status" value="1"/>
</dbReference>
<gene>
    <name evidence="1" type="primary">rsmH</name>
    <name type="synonym">mraW</name>
    <name type="ordered locus">BAV2886</name>
</gene>
<sequence length="355" mass="38344">MKFEHRPVLLEPTVDALLQADFGGRGASRARPRDEAAALTRQATGIFVDGTFGRGGHSRELLGRLGPQARLVVFDKDPEAIAVAQALAAEDARVTVVHGGFATMTEELAARGIERIDGVMLDLGVSSPQIDDADRGFSFMREGPLDMRMDTSRGPTVADWLAQASVEEMREVIADYGEERFAFQVAKAIAARRATRPLHTTLELAECVASAVRTREKGQHPATRTFQALRIYINRELEELARALASAIELLVPGGRLAVISFHSLEDRMVKQCIAAAARPAAAHPRLPLRESELPQPILQTLGKVVADDAEVAGNARSRSAILRAAERTSQPLPATGAEDFVPAVPGAAEKGRRR</sequence>
<reference key="1">
    <citation type="journal article" date="2006" name="J. Bacteriol.">
        <title>Comparison of the genome sequence of the poultry pathogen Bordetella avium with those of B. bronchiseptica, B. pertussis, and B. parapertussis reveals extensive diversity in surface structures associated with host interaction.</title>
        <authorList>
            <person name="Sebaihia M."/>
            <person name="Preston A."/>
            <person name="Maskell D.J."/>
            <person name="Kuzmiak H."/>
            <person name="Connell T.D."/>
            <person name="King N.D."/>
            <person name="Orndorff P.E."/>
            <person name="Miyamoto D.M."/>
            <person name="Thomson N.R."/>
            <person name="Harris D."/>
            <person name="Goble A."/>
            <person name="Lord A."/>
            <person name="Murphy L."/>
            <person name="Quail M.A."/>
            <person name="Rutter S."/>
            <person name="Squares R."/>
            <person name="Squares S."/>
            <person name="Woodward J."/>
            <person name="Parkhill J."/>
            <person name="Temple L.M."/>
        </authorList>
    </citation>
    <scope>NUCLEOTIDE SEQUENCE [LARGE SCALE GENOMIC DNA]</scope>
    <source>
        <strain>197N</strain>
    </source>
</reference>